<organism>
    <name type="scientific">Campylobacter concisus (strain 13826)</name>
    <dbReference type="NCBI Taxonomy" id="360104"/>
    <lineage>
        <taxon>Bacteria</taxon>
        <taxon>Pseudomonadati</taxon>
        <taxon>Campylobacterota</taxon>
        <taxon>Epsilonproteobacteria</taxon>
        <taxon>Campylobacterales</taxon>
        <taxon>Campylobacteraceae</taxon>
        <taxon>Campylobacter</taxon>
    </lineage>
</organism>
<comment type="function">
    <text evidence="2">GTP hydrolase that promotes the GTP-dependent binding of aminoacyl-tRNA to the A-site of ribosomes during protein biosynthesis.</text>
</comment>
<comment type="catalytic activity">
    <reaction evidence="2">
        <text>GTP + H2O = GDP + phosphate + H(+)</text>
        <dbReference type="Rhea" id="RHEA:19669"/>
        <dbReference type="ChEBI" id="CHEBI:15377"/>
        <dbReference type="ChEBI" id="CHEBI:15378"/>
        <dbReference type="ChEBI" id="CHEBI:37565"/>
        <dbReference type="ChEBI" id="CHEBI:43474"/>
        <dbReference type="ChEBI" id="CHEBI:58189"/>
        <dbReference type="EC" id="3.6.5.3"/>
    </reaction>
    <physiologicalReaction direction="left-to-right" evidence="2">
        <dbReference type="Rhea" id="RHEA:19670"/>
    </physiologicalReaction>
</comment>
<comment type="subunit">
    <text evidence="2">Monomer.</text>
</comment>
<comment type="subcellular location">
    <subcellularLocation>
        <location evidence="2">Cytoplasm</location>
    </subcellularLocation>
</comment>
<comment type="similarity">
    <text evidence="2">Belongs to the TRAFAC class translation factor GTPase superfamily. Classic translation factor GTPase family. EF-Tu/EF-1A subfamily.</text>
</comment>
<feature type="chain" id="PRO_1000015626" description="Elongation factor Tu">
    <location>
        <begin position="1"/>
        <end position="399"/>
    </location>
</feature>
<feature type="domain" description="tr-type G">
    <location>
        <begin position="10"/>
        <end position="209"/>
    </location>
</feature>
<feature type="region of interest" description="G1" evidence="1">
    <location>
        <begin position="19"/>
        <end position="26"/>
    </location>
</feature>
<feature type="region of interest" description="G2" evidence="1">
    <location>
        <begin position="60"/>
        <end position="64"/>
    </location>
</feature>
<feature type="region of interest" description="G3" evidence="1">
    <location>
        <begin position="81"/>
        <end position="84"/>
    </location>
</feature>
<feature type="region of interest" description="G4" evidence="1">
    <location>
        <begin position="136"/>
        <end position="139"/>
    </location>
</feature>
<feature type="region of interest" description="G5" evidence="1">
    <location>
        <begin position="174"/>
        <end position="176"/>
    </location>
</feature>
<feature type="binding site" evidence="2">
    <location>
        <begin position="19"/>
        <end position="26"/>
    </location>
    <ligand>
        <name>GTP</name>
        <dbReference type="ChEBI" id="CHEBI:37565"/>
    </ligand>
</feature>
<feature type="binding site" evidence="2">
    <location>
        <position position="26"/>
    </location>
    <ligand>
        <name>Mg(2+)</name>
        <dbReference type="ChEBI" id="CHEBI:18420"/>
    </ligand>
</feature>
<feature type="binding site" evidence="2">
    <location>
        <begin position="81"/>
        <end position="85"/>
    </location>
    <ligand>
        <name>GTP</name>
        <dbReference type="ChEBI" id="CHEBI:37565"/>
    </ligand>
</feature>
<feature type="binding site" evidence="2">
    <location>
        <begin position="136"/>
        <end position="139"/>
    </location>
    <ligand>
        <name>GTP</name>
        <dbReference type="ChEBI" id="CHEBI:37565"/>
    </ligand>
</feature>
<gene>
    <name evidence="2" type="primary">tuf</name>
    <name type="ordered locus">Ccon26_06560</name>
    <name type="ORF">CCC13826_0166</name>
</gene>
<sequence length="399" mass="43614">MAKEKFSRNKPHVNIGTIGHVDHGKTTLTAAISAVLSRKGLAELKDYDNIDNAPEEKERGITIATSHIEYETEKRHYAHVDCPGHADYVKNMITGAAQMDGAILVVSAADGPMPQTREHILLSRQVGVPYIVVFMNKADMVDDAELLELVEMEIRELLNEYNFPGDDTPIVSGSALKALEEAKAGQDGEWSAKIMELMDAVDSYIPTPVRATDKDLLMPIEDVFSISGRGTVVTGRIEKGVVKVGDTIEIVGIKPTQTTTVTGVEMFRKEMDQGEAGDNVGVLLRGTKKEDVERGMVLCKPKSITPHTKFEGEVYILTKEEGGRHTPFFNNYRPQFYVRTTDVTGSITLPEGTEMVMPGDNVRISVELIAPVALEEGTRFAIREGGRTVGSGVVSKILG</sequence>
<dbReference type="EC" id="3.6.5.3" evidence="2"/>
<dbReference type="EMBL" id="CP000792">
    <property type="protein sequence ID" value="EAT97379.2"/>
    <property type="molecule type" value="Genomic_DNA"/>
</dbReference>
<dbReference type="RefSeq" id="WP_002941132.1">
    <property type="nucleotide sequence ID" value="NC_009802.2"/>
</dbReference>
<dbReference type="SMR" id="A7ZCN0"/>
<dbReference type="STRING" id="360104.CCC13826_0166"/>
<dbReference type="KEGG" id="cco:CCC13826_0166"/>
<dbReference type="eggNOG" id="COG0050">
    <property type="taxonomic scope" value="Bacteria"/>
</dbReference>
<dbReference type="HOGENOM" id="CLU_007265_0_0_7"/>
<dbReference type="OrthoDB" id="9803139at2"/>
<dbReference type="Proteomes" id="UP000001121">
    <property type="component" value="Chromosome"/>
</dbReference>
<dbReference type="GO" id="GO:0005829">
    <property type="term" value="C:cytosol"/>
    <property type="evidence" value="ECO:0007669"/>
    <property type="project" value="TreeGrafter"/>
</dbReference>
<dbReference type="GO" id="GO:0005525">
    <property type="term" value="F:GTP binding"/>
    <property type="evidence" value="ECO:0007669"/>
    <property type="project" value="UniProtKB-UniRule"/>
</dbReference>
<dbReference type="GO" id="GO:0003924">
    <property type="term" value="F:GTPase activity"/>
    <property type="evidence" value="ECO:0007669"/>
    <property type="project" value="InterPro"/>
</dbReference>
<dbReference type="GO" id="GO:0003746">
    <property type="term" value="F:translation elongation factor activity"/>
    <property type="evidence" value="ECO:0007669"/>
    <property type="project" value="UniProtKB-UniRule"/>
</dbReference>
<dbReference type="CDD" id="cd01884">
    <property type="entry name" value="EF_Tu"/>
    <property type="match status" value="1"/>
</dbReference>
<dbReference type="CDD" id="cd03697">
    <property type="entry name" value="EFTU_II"/>
    <property type="match status" value="1"/>
</dbReference>
<dbReference type="CDD" id="cd03707">
    <property type="entry name" value="EFTU_III"/>
    <property type="match status" value="1"/>
</dbReference>
<dbReference type="FunFam" id="2.40.30.10:FF:000001">
    <property type="entry name" value="Elongation factor Tu"/>
    <property type="match status" value="1"/>
</dbReference>
<dbReference type="FunFam" id="3.40.50.300:FF:000003">
    <property type="entry name" value="Elongation factor Tu"/>
    <property type="match status" value="1"/>
</dbReference>
<dbReference type="Gene3D" id="3.40.50.300">
    <property type="entry name" value="P-loop containing nucleotide triphosphate hydrolases"/>
    <property type="match status" value="1"/>
</dbReference>
<dbReference type="Gene3D" id="2.40.30.10">
    <property type="entry name" value="Translation factors"/>
    <property type="match status" value="2"/>
</dbReference>
<dbReference type="HAMAP" id="MF_00118_B">
    <property type="entry name" value="EF_Tu_B"/>
    <property type="match status" value="1"/>
</dbReference>
<dbReference type="InterPro" id="IPR041709">
    <property type="entry name" value="EF-Tu_GTP-bd"/>
</dbReference>
<dbReference type="InterPro" id="IPR050055">
    <property type="entry name" value="EF-Tu_GTPase"/>
</dbReference>
<dbReference type="InterPro" id="IPR004161">
    <property type="entry name" value="EFTu-like_2"/>
</dbReference>
<dbReference type="InterPro" id="IPR033720">
    <property type="entry name" value="EFTU_2"/>
</dbReference>
<dbReference type="InterPro" id="IPR031157">
    <property type="entry name" value="G_TR_CS"/>
</dbReference>
<dbReference type="InterPro" id="IPR027417">
    <property type="entry name" value="P-loop_NTPase"/>
</dbReference>
<dbReference type="InterPro" id="IPR005225">
    <property type="entry name" value="Small_GTP-bd"/>
</dbReference>
<dbReference type="InterPro" id="IPR000795">
    <property type="entry name" value="T_Tr_GTP-bd_dom"/>
</dbReference>
<dbReference type="InterPro" id="IPR009000">
    <property type="entry name" value="Transl_B-barrel_sf"/>
</dbReference>
<dbReference type="InterPro" id="IPR009001">
    <property type="entry name" value="Transl_elong_EF1A/Init_IF2_C"/>
</dbReference>
<dbReference type="InterPro" id="IPR004541">
    <property type="entry name" value="Transl_elong_EFTu/EF1A_bac/org"/>
</dbReference>
<dbReference type="InterPro" id="IPR004160">
    <property type="entry name" value="Transl_elong_EFTu/EF1A_C"/>
</dbReference>
<dbReference type="NCBIfam" id="TIGR00485">
    <property type="entry name" value="EF-Tu"/>
    <property type="match status" value="1"/>
</dbReference>
<dbReference type="NCBIfam" id="NF000766">
    <property type="entry name" value="PRK00049.1"/>
    <property type="match status" value="1"/>
</dbReference>
<dbReference type="NCBIfam" id="NF009372">
    <property type="entry name" value="PRK12735.1"/>
    <property type="match status" value="1"/>
</dbReference>
<dbReference type="NCBIfam" id="NF009373">
    <property type="entry name" value="PRK12736.1"/>
    <property type="match status" value="1"/>
</dbReference>
<dbReference type="NCBIfam" id="TIGR00231">
    <property type="entry name" value="small_GTP"/>
    <property type="match status" value="1"/>
</dbReference>
<dbReference type="PANTHER" id="PTHR43721:SF22">
    <property type="entry name" value="ELONGATION FACTOR TU, MITOCHONDRIAL"/>
    <property type="match status" value="1"/>
</dbReference>
<dbReference type="PANTHER" id="PTHR43721">
    <property type="entry name" value="ELONGATION FACTOR TU-RELATED"/>
    <property type="match status" value="1"/>
</dbReference>
<dbReference type="Pfam" id="PF00009">
    <property type="entry name" value="GTP_EFTU"/>
    <property type="match status" value="1"/>
</dbReference>
<dbReference type="Pfam" id="PF03144">
    <property type="entry name" value="GTP_EFTU_D2"/>
    <property type="match status" value="1"/>
</dbReference>
<dbReference type="Pfam" id="PF03143">
    <property type="entry name" value="GTP_EFTU_D3"/>
    <property type="match status" value="1"/>
</dbReference>
<dbReference type="PRINTS" id="PR00315">
    <property type="entry name" value="ELONGATNFCT"/>
</dbReference>
<dbReference type="SUPFAM" id="SSF50465">
    <property type="entry name" value="EF-Tu/eEF-1alpha/eIF2-gamma C-terminal domain"/>
    <property type="match status" value="1"/>
</dbReference>
<dbReference type="SUPFAM" id="SSF52540">
    <property type="entry name" value="P-loop containing nucleoside triphosphate hydrolases"/>
    <property type="match status" value="1"/>
</dbReference>
<dbReference type="SUPFAM" id="SSF50447">
    <property type="entry name" value="Translation proteins"/>
    <property type="match status" value="1"/>
</dbReference>
<dbReference type="PROSITE" id="PS00301">
    <property type="entry name" value="G_TR_1"/>
    <property type="match status" value="1"/>
</dbReference>
<dbReference type="PROSITE" id="PS51722">
    <property type="entry name" value="G_TR_2"/>
    <property type="match status" value="1"/>
</dbReference>
<evidence type="ECO:0000250" key="1"/>
<evidence type="ECO:0000255" key="2">
    <source>
        <dbReference type="HAMAP-Rule" id="MF_00118"/>
    </source>
</evidence>
<protein>
    <recommendedName>
        <fullName evidence="2">Elongation factor Tu</fullName>
        <shortName evidence="2">EF-Tu</shortName>
        <ecNumber evidence="2">3.6.5.3</ecNumber>
    </recommendedName>
</protein>
<name>EFTU_CAMC1</name>
<keyword id="KW-0963">Cytoplasm</keyword>
<keyword id="KW-0251">Elongation factor</keyword>
<keyword id="KW-0342">GTP-binding</keyword>
<keyword id="KW-0378">Hydrolase</keyword>
<keyword id="KW-0460">Magnesium</keyword>
<keyword id="KW-0479">Metal-binding</keyword>
<keyword id="KW-0547">Nucleotide-binding</keyword>
<keyword id="KW-0648">Protein biosynthesis</keyword>
<reference key="1">
    <citation type="submission" date="2007-10" db="EMBL/GenBank/DDBJ databases">
        <title>Genome sequence of Campylobacter concisus 13826 isolated from human feces.</title>
        <authorList>
            <person name="Fouts D.E."/>
            <person name="Mongodin E.F."/>
            <person name="Puiu D."/>
            <person name="Sebastian Y."/>
            <person name="Miller W.G."/>
            <person name="Mandrell R.E."/>
            <person name="On S."/>
            <person name="Nelson K.E."/>
        </authorList>
    </citation>
    <scope>NUCLEOTIDE SEQUENCE [LARGE SCALE GENOMIC DNA]</scope>
    <source>
        <strain>13826</strain>
    </source>
</reference>
<accession>A7ZCN0</accession>
<proteinExistence type="inferred from homology"/>